<sequence>ECRYWLGGCSAGQTCCKHLVCSRRHGWCVWDGTFS</sequence>
<accession>P83480</accession>
<name>TXPR1_THRPR</name>
<evidence type="ECO:0000269" key="1">
    <source>
    </source>
</evidence>
<evidence type="ECO:0000269" key="2">
    <source>
    </source>
</evidence>
<evidence type="ECO:0000269" key="3">
    <source>
    </source>
</evidence>
<evidence type="ECO:0000269" key="4">
    <source>
    </source>
</evidence>
<evidence type="ECO:0000269" key="5">
    <source>
    </source>
</evidence>
<evidence type="ECO:0000269" key="6">
    <source>
    </source>
</evidence>
<evidence type="ECO:0000269" key="7">
    <source>
    </source>
</evidence>
<evidence type="ECO:0000269" key="8">
    <source>
    </source>
</evidence>
<evidence type="ECO:0000303" key="9">
    <source>
    </source>
</evidence>
<evidence type="ECO:0000303" key="10">
    <source>
    </source>
</evidence>
<evidence type="ECO:0000303" key="11">
    <source>
    </source>
</evidence>
<evidence type="ECO:0000303" key="12">
    <source>
    </source>
</evidence>
<evidence type="ECO:0000303" key="13">
    <source>
    </source>
</evidence>
<evidence type="ECO:0000303" key="14">
    <source>
    </source>
</evidence>
<evidence type="ECO:0000303" key="15">
    <source>
    </source>
</evidence>
<evidence type="ECO:0000305" key="16"/>
<evidence type="ECO:0000305" key="17">
    <source>
    </source>
</evidence>
<evidence type="ECO:0000305" key="18">
    <source>
    </source>
</evidence>
<evidence type="ECO:0007744" key="19">
    <source>
        <dbReference type="PDB" id="2M9L"/>
    </source>
</evidence>
<evidence type="ECO:0007829" key="20">
    <source>
        <dbReference type="PDB" id="2M9L"/>
    </source>
</evidence>
<proteinExistence type="evidence at protein level"/>
<feature type="peptide" id="PRO_0000045029" description="Beta/omega-theraphotoxin-Tp1a" evidence="9">
    <location>
        <begin position="1"/>
        <end position="35"/>
    </location>
</feature>
<feature type="site" description="Pharmacophore for Nav1.7/SCN9A" evidence="8">
    <location>
        <position position="6"/>
    </location>
</feature>
<feature type="site" description="Pharmacophore for Nav1.7/SCN9A" evidence="8">
    <location>
        <position position="19"/>
    </location>
</feature>
<feature type="site" description="Pharmacophore for Nav1.7/SCN9A" evidence="8">
    <location>
        <position position="27"/>
    </location>
</feature>
<feature type="site" description="Pharmacophore for Nav1.7/SCN9A" evidence="8">
    <location>
        <position position="29"/>
    </location>
</feature>
<feature type="site" description="Pharmacophore for Nav1.7/SCN9A" evidence="8">
    <location>
        <position position="30"/>
    </location>
</feature>
<feature type="site" description="Pharmacophore for Nav1.7/SCN9A" evidence="8">
    <location>
        <position position="31"/>
    </location>
</feature>
<feature type="disulfide bond" evidence="4 19">
    <location>
        <begin position="2"/>
        <end position="16"/>
    </location>
</feature>
<feature type="disulfide bond" evidence="4 19">
    <location>
        <begin position="9"/>
        <end position="21"/>
    </location>
</feature>
<feature type="disulfide bond" evidence="4 19">
    <location>
        <begin position="15"/>
        <end position="28"/>
    </location>
</feature>
<feature type="mutagenesis site" description="Reduced ability to inhibit sodium channel Nav1.2/SCN2A." evidence="4">
    <original>R</original>
    <variation>A</variation>
    <location>
        <position position="3"/>
    </location>
</feature>
<feature type="mutagenesis site" description="Reduced ability to inhibit sodium channel Nav1.2/SCN2A." evidence="4">
    <original>W</original>
    <variation>A</variation>
    <location>
        <position position="5"/>
    </location>
</feature>
<feature type="mutagenesis site" description="Decrease in ability to inhibit Nav1.7/SCN9A." evidence="8">
    <original>L</original>
    <variation>A</variation>
    <location>
        <position position="6"/>
    </location>
</feature>
<feature type="mutagenesis site" description="Reduced ability to inhibit nociceptor cation channel TRPA1." evidence="4">
    <original>Q</original>
    <variation>A</variation>
    <location>
        <position position="13"/>
    </location>
</feature>
<feature type="mutagenesis site" description="Decrease in ability to inhibit Nav1.2/SCN2A, Nav1.5/SCN5A, Nav1.6/SCN8A and Nav1.7/SCN9A." evidence="8">
    <original>K</original>
    <variation>E</variation>
    <location>
        <position position="17"/>
    </location>
</feature>
<feature type="mutagenesis site" description="Decrease in ability to inhibit the channels TRPA1, Nav1.2/SCN2A, and Nav1.7/SCN9A, probably due to improper folding." evidence="4 8">
    <original>L</original>
    <variation>A</variation>
    <location>
        <position position="19"/>
    </location>
</feature>
<feature type="mutagenesis site" description="Reduced ability to inhibit nociceptor cation channel TRPA1. Reduced ability to inhibit sodium channel Nav1.2/SCN2A." evidence="4">
    <original>S</original>
    <variation>A</variation>
    <location>
        <position position="22"/>
    </location>
</feature>
<feature type="mutagenesis site" description="Reduced ability to inhibit sodium channel Nav1.2/SCN2A." evidence="4">
    <original>R</original>
    <variation>A</variation>
    <location>
        <position position="23"/>
    </location>
</feature>
<feature type="mutagenesis site" description="Decrease in ability to inhibit Nav1.2/SCN2A and Nav1.7/SCN9A." evidence="4 8">
    <original>W</original>
    <variation>A</variation>
    <location>
        <position position="27"/>
    </location>
</feature>
<feature type="mutagenesis site" description="Decrease in ability to inhibit Nav1.2/SCN2A and Nav1.7/SCN9A." evidence="4 8">
    <original>V</original>
    <variation>A</variation>
    <location>
        <position position="29"/>
    </location>
</feature>
<feature type="mutagenesis site" description="Decrease in ability to inhibit the channels TRPA1, Nav1.2/SCN2A and Nav1.7/SCN9A." evidence="4 8">
    <original>W</original>
    <variation>A</variation>
    <location>
        <position position="30"/>
    </location>
</feature>
<feature type="mutagenesis site" description="Decrease in ability to inhibit Nav1.2/SCN2A and Nav1.7/SCN9A." evidence="4 8">
    <original>D</original>
    <variation>A</variation>
    <location>
        <position position="31"/>
    </location>
</feature>
<feature type="mutagenesis site" description="Reduced ability to inhibit sodium channel Nav1.2/SCN2A." evidence="4">
    <original>G</original>
    <variation>A</variation>
    <location>
        <position position="32"/>
    </location>
</feature>
<feature type="mutagenesis site" description="Reduced ability to inhibit nociceptor cation channel TRPA1. Reduced ability to inhibit sodium channel Nav1.2/SCN2A." evidence="4">
    <original>F</original>
    <variation>A</variation>
    <location>
        <position position="34"/>
    </location>
</feature>
<feature type="mutagenesis site" description="Reduced ability to inhibit nociceptor cation channel TRPA1." evidence="4">
    <original>S</original>
    <variation>A</variation>
    <location>
        <position position="35"/>
    </location>
</feature>
<feature type="strand" evidence="20">
    <location>
        <begin position="19"/>
        <end position="22"/>
    </location>
</feature>
<feature type="turn" evidence="20">
    <location>
        <begin position="23"/>
        <end position="26"/>
    </location>
</feature>
<feature type="strand" evidence="20">
    <location>
        <begin position="27"/>
        <end position="30"/>
    </location>
</feature>
<feature type="turn" evidence="20">
    <location>
        <begin position="31"/>
        <end position="33"/>
    </location>
</feature>
<organism>
    <name type="scientific">Thrixopelma pruriens</name>
    <name type="common">Peruvian green velvet tarantula</name>
    <dbReference type="NCBI Taxonomy" id="213387"/>
    <lineage>
        <taxon>Eukaryota</taxon>
        <taxon>Metazoa</taxon>
        <taxon>Ecdysozoa</taxon>
        <taxon>Arthropoda</taxon>
        <taxon>Chelicerata</taxon>
        <taxon>Arachnida</taxon>
        <taxon>Araneae</taxon>
        <taxon>Mygalomorphae</taxon>
        <taxon>Theraphosidae</taxon>
        <taxon>Thrixopelma</taxon>
    </lineage>
</organism>
<comment type="function">
    <text evidence="1 2 3 4 5 6 7">Ion channel impairing toxin that inhibits voltage-gated calcium channel Cav3.1/CACNA1G (IC(50)=53 nM), voltage-gated potassium channels Kv2.1/KCNB1 (IC(50)=411 nM), all sodium channels tested (Nav1.2/SCN2A (IC(50)=60-104 nM), Nav1.5/SCN5A (IC(50)=76-358 nM), Nav1.6/SCN8A (IC(50)=21-133 nM), Nav1.7/SCN9A (IC(50)=51-95 nM), and Nav1.8/SCN10A) and the nociceptor cation channel TRPA1 (IC(50)=389 nM) (PubMed:12475222, PubMed:17087985, PubMed:20351484, PubMed:24530065, PubMed:24886690, PubMed:29703751, PubMed:31234412). Acts as a potent and selective blocker of voltage-gated calcium channel Cav3.1/CACNA1G, but not of Cav3.2/CACNA1H, and Cav3.3/CACNA1I (PubMed:20351484, PubMed:24886690). On Nav1.7/SCN9A, primarily interacts with the DII and DIV voltage-sensor domains (PubMed:32511987). Also acts as an inhibitor of nociceptor cation channel TRPA1 (IC(50)~389 nM) by binding to the S1-S4 gating domain of TRPA1 (PubMed:24530065). It shows moderate affinity for lipid bilayers (PubMed:29703751).</text>
</comment>
<comment type="subcellular location">
    <subcellularLocation>
        <location evidence="1">Secreted</location>
    </subcellularLocation>
</comment>
<comment type="tissue specificity">
    <text evidence="17">Expressed by the venom gland.</text>
</comment>
<comment type="domain">
    <text evidence="4">The presence of a 'disulfide through disulfide knot' structurally defines this protein as a knottin.</text>
</comment>
<comment type="PTM">
    <text evidence="8">An unnatural amidation at Ser-35 provokes a 14-fold increased toxin ability to inhibit Nav1.2/SCN2A and a ~2-fold decreased toxin ability to inhibit both Nav1.5/SCN5A and Nav1.6/SCN8A.</text>
</comment>
<comment type="mass spectrometry"/>
<comment type="pharmaceutical">
    <text evidence="18">The amidated mutant G32A (ProTx-I-G32A-NH2) shows a decreased ability to inhibit all sodium channels tested, with a more pronounced reduction on Nav1.2/SCN2A and Nav1.5/SCN5A. As a consequence, this mutant shows an enhanced selectivity and potency for Nav1.7/SCN9A, and thus may provide a good starting point for second generation analogs to treat pain.</text>
</comment>
<comment type="miscellaneous">
    <text evidence="16">The primary structure of the mature peptide is identical to that of Beta/omega-theraphotoxin-Bp1a from Bumba pulcherrimaklaasi (AC P0DQN3).</text>
</comment>
<comment type="similarity">
    <text evidence="16">Belongs to the neurotoxin 10 (Hwtx-1) family. 54 (ProTx-1) subfamily.</text>
</comment>
<protein>
    <recommendedName>
        <fullName evidence="16">Beta/omega-theraphotoxin-Tp1a</fullName>
        <shortName evidence="16">Beta/omega-TRTX-Tp1a</shortName>
    </recommendedName>
    <alternativeName>
        <fullName evidence="16">Protoxin-1</fullName>
        <shortName evidence="16">ProTx-1</shortName>
        <shortName evidence="16">ProTx1</shortName>
    </alternativeName>
    <alternativeName>
        <fullName evidence="12 13">Protoxin-I</fullName>
        <shortName evidence="9 10 11 12 13 14 15">ProTx-I</shortName>
    </alternativeName>
</protein>
<reference key="1">
    <citation type="journal article" date="2002" name="Biochemistry">
        <title>Two tarantula peptides inhibit activation of multiple sodium channels.</title>
        <authorList>
            <person name="Middleton R.E."/>
            <person name="Warren V.A."/>
            <person name="Kraus R.L."/>
            <person name="Hwang J.C."/>
            <person name="Liu C.J."/>
            <person name="Dai G."/>
            <person name="Brochu R.M."/>
            <person name="Kohler M.G."/>
            <person name="Gao Y.-D."/>
            <person name="Garsky V.M."/>
            <person name="Bogusky M.J."/>
            <person name="Mehl J.T."/>
            <person name="Cohen C.J."/>
            <person name="Smith M.M."/>
        </authorList>
    </citation>
    <scope>PROTEIN SEQUENCE</scope>
    <scope>SYNTHESIS</scope>
    <scope>FUNCTION</scope>
    <scope>SUBCELLULAR LOCATION</scope>
    <scope>MASS SPECTROMETRY</scope>
    <source>
        <tissue>Venom</tissue>
    </source>
</reference>
<reference key="2">
    <citation type="journal article" date="2007" name="Toxicon">
        <title>ProTx-I and ProTx-II: gating modifiers of voltage-gated sodium channels.</title>
        <authorList>
            <person name="Priest B.T."/>
            <person name="Blumenthal K.M."/>
            <person name="Smith J.J."/>
            <person name="Warren V.A."/>
            <person name="Smith M.M."/>
        </authorList>
    </citation>
    <scope>SYNTHESIS</scope>
    <scope>FUNCTION</scope>
</reference>
<reference key="3">
    <citation type="journal article" date="2010" name="J. Pharmacol. Sci.">
        <title>Tarantula toxin ProTx-I differentiates between human T-type voltage-gated Ca2+ Channels Cav3.1 and Cav3.2.</title>
        <authorList>
            <person name="Ohkubo T."/>
            <person name="Yamazaki J."/>
            <person name="Kitamura K."/>
        </authorList>
    </citation>
    <scope>FUNCTION</scope>
</reference>
<reference key="4">
    <citation type="journal article" date="2014" name="Mol. Brain">
        <title>Block of T-type calcium channels by protoxins I and II.</title>
        <authorList>
            <person name="Bladen C."/>
            <person name="Hamid J."/>
            <person name="Souza I.A."/>
            <person name="Zamponi G.W."/>
        </authorList>
    </citation>
    <scope>FUNCTION</scope>
</reference>
<reference key="5">
    <citation type="journal article" date="2015" name="Int. J. Pept.">
        <title>High proteolytic resistance of spider-derived inhibitor cystine knots.</title>
        <authorList>
            <person name="Kikuchi K."/>
            <person name="Sugiura M."/>
            <person name="Kimura T."/>
        </authorList>
    </citation>
    <scope>DOMAIN</scope>
</reference>
<reference key="6">
    <citation type="journal article" date="2018" name="J. Biol. Chem.">
        <title>Gating modifier toxins isolated from spider venom: modulation of voltage-gated sodium channels and the role of lipid membranes.</title>
        <authorList>
            <person name="Agwa A.J."/>
            <person name="Peigneur S."/>
            <person name="Chow C.Y."/>
            <person name="Lawrence N."/>
            <person name="Craik D.J."/>
            <person name="Tytgat J."/>
            <person name="King G.F."/>
            <person name="Henriques S.T."/>
            <person name="Schroeder C.I."/>
        </authorList>
    </citation>
    <scope>FUNCTION</scope>
    <scope>SYNTHESIS</scope>
</reference>
<reference key="7">
    <citation type="journal article" date="2019" name="Toxins">
        <title>Chemical synthesis, proper folding, Nav channel selectivity profile and analgesic properties of the spider peptide Phlotoxin 1.</title>
        <authorList>
            <person name="Nicolas S."/>
            <person name="Zoukimian C."/>
            <person name="Bosmans F."/>
            <person name="Montnach J."/>
            <person name="Diochot S."/>
            <person name="Cuypers E."/>
            <person name="De Waard S."/>
            <person name="Beroud R."/>
            <person name="Mebs D."/>
            <person name="Craik D."/>
            <person name="Boturyn D."/>
            <person name="Lazdunski M."/>
            <person name="Tytgat J."/>
            <person name="De Waard M."/>
        </authorList>
    </citation>
    <scope>FUNCTION ON NAV1.7/SCN9A</scope>
    <scope>SYNTHESIS</scope>
</reference>
<reference key="8">
    <citation type="journal article" date="2020" name="Biochem. Pharmacol.">
        <title>Mutational analysis of ProTx-I and the novel venom peptide Pe1b provide insight into residues responsible for selective inhibition of the analgesic drug target NaV1.7.</title>
        <authorList>
            <person name="Rupasinghe D.B."/>
            <person name="Herzig V."/>
            <person name="Vetter I."/>
            <person name="Dekan Z."/>
            <person name="Gilchrist J."/>
            <person name="Bosmans F."/>
            <person name="Alewood P.F."/>
            <person name="Lewis R.J."/>
            <person name="King G.F."/>
        </authorList>
    </citation>
    <scope>RECOMBINANT EXPRESSION</scope>
    <scope>FUNCTION</scope>
    <scope>SUBCELLULAR LOCATION</scope>
    <scope>MUTAGENESIS OF LEU-6; LYS-17; LEU-19; TRP-27; VAL-29; TRP-30 AND ASP-31</scope>
</reference>
<reference evidence="19" key="9">
    <citation type="journal article" date="2014" name="Curr. Biol.">
        <title>A tarantula-venom peptide antagonizes the TRPA1 nociceptor ion channel by binding to the S1-S4 gating domain.</title>
        <authorList>
            <person name="Gui J."/>
            <person name="Liu B."/>
            <person name="Cao G."/>
            <person name="Lipchik A.M."/>
            <person name="Perez M."/>
            <person name="Dekan Z."/>
            <person name="Mobli M."/>
            <person name="Daly N.L."/>
            <person name="Alewood P.F."/>
            <person name="Parker L.L."/>
            <person name="King G.F."/>
            <person name="Zhou Y."/>
            <person name="Jordt S.E."/>
            <person name="Nitabach M.N."/>
        </authorList>
    </citation>
    <scope>STRUCTURE BY NMR</scope>
    <scope>DISULFIDE BONDS</scope>
    <scope>FUNCTION</scope>
    <scope>MUTAGENESIS OF ARG-3; TRP-5; GLN-13; LEU-19; SER-22; ARG-23; TRP-27; VAL-29; TRP-30; ASP-31; GLY-32; PHE-34 AND SER-35</scope>
</reference>
<keyword id="KW-0002">3D-structure</keyword>
<keyword id="KW-0108">Calcium channel impairing toxin</keyword>
<keyword id="KW-0903">Direct protein sequencing</keyword>
<keyword id="KW-1015">Disulfide bond</keyword>
<keyword id="KW-0872">Ion channel impairing toxin</keyword>
<keyword id="KW-0960">Knottin</keyword>
<keyword id="KW-0528">Neurotoxin</keyword>
<keyword id="KW-0582">Pharmaceutical</keyword>
<keyword id="KW-0632">Potassium channel impairing toxin</keyword>
<keyword id="KW-0964">Secreted</keyword>
<keyword id="KW-0800">Toxin</keyword>
<keyword id="KW-1218">Voltage-gated calcium channel impairing toxin</keyword>
<keyword id="KW-1220">Voltage-gated potassium channel impairing toxin</keyword>
<keyword id="KW-0738">Voltage-gated sodium channel impairing toxin</keyword>
<dbReference type="PDB" id="2M9L">
    <property type="method" value="NMR"/>
    <property type="chains" value="A=1-35"/>
</dbReference>
<dbReference type="PDB" id="9DBN">
    <property type="method" value="EM"/>
    <property type="resolution" value="2.76 A"/>
    <property type="chains" value="B=1-35"/>
</dbReference>
<dbReference type="PDBsum" id="2M9L"/>
<dbReference type="PDBsum" id="9DBN"/>
<dbReference type="BMRB" id="P83480"/>
<dbReference type="EMDB" id="EMD-46721"/>
<dbReference type="SMR" id="P83480"/>
<dbReference type="TCDB" id="8.B.5.1.1">
    <property type="family name" value="the na(+)/k(+)/ca(2+) channel targeting tarantula huwentoxin (tht) family"/>
</dbReference>
<dbReference type="ArachnoServer" id="AS000413">
    <property type="toxin name" value="beta/omega-theraphotoxin-Tp1a"/>
</dbReference>
<dbReference type="EvolutionaryTrace" id="P83480"/>
<dbReference type="GO" id="GO:0005576">
    <property type="term" value="C:extracellular region"/>
    <property type="evidence" value="ECO:0007669"/>
    <property type="project" value="UniProtKB-SubCell"/>
</dbReference>
<dbReference type="GO" id="GO:0019855">
    <property type="term" value="F:calcium channel inhibitor activity"/>
    <property type="evidence" value="ECO:0000314"/>
    <property type="project" value="UniProtKB"/>
</dbReference>
<dbReference type="GO" id="GO:0015459">
    <property type="term" value="F:potassium channel regulator activity"/>
    <property type="evidence" value="ECO:0007669"/>
    <property type="project" value="UniProtKB-KW"/>
</dbReference>
<dbReference type="GO" id="GO:0017080">
    <property type="term" value="F:sodium channel regulator activity"/>
    <property type="evidence" value="ECO:0007669"/>
    <property type="project" value="UniProtKB-KW"/>
</dbReference>
<dbReference type="GO" id="GO:0090729">
    <property type="term" value="F:toxin activity"/>
    <property type="evidence" value="ECO:0000314"/>
    <property type="project" value="UniProtKB"/>
</dbReference>
<dbReference type="InterPro" id="IPR011696">
    <property type="entry name" value="Huwentoxin-1"/>
</dbReference>
<dbReference type="Pfam" id="PF07740">
    <property type="entry name" value="Toxin_12"/>
    <property type="match status" value="1"/>
</dbReference>
<dbReference type="SUPFAM" id="SSF57059">
    <property type="entry name" value="omega toxin-like"/>
    <property type="match status" value="1"/>
</dbReference>